<feature type="chain" id="PRO_1000002399" description="Holliday junction branch migration complex subunit RuvA">
    <location>
        <begin position="1"/>
        <end position="217"/>
    </location>
</feature>
<feature type="region of interest" description="Domain I" evidence="1">
    <location>
        <begin position="1"/>
        <end position="64"/>
    </location>
</feature>
<feature type="region of interest" description="Domain II" evidence="1">
    <location>
        <begin position="65"/>
        <end position="145"/>
    </location>
</feature>
<feature type="region of interest" description="Flexible linker" evidence="1">
    <location>
        <begin position="146"/>
        <end position="160"/>
    </location>
</feature>
<feature type="region of interest" description="Domain III" evidence="1">
    <location>
        <begin position="161"/>
        <end position="217"/>
    </location>
</feature>
<name>RUVA_BARBK</name>
<gene>
    <name evidence="1" type="primary">ruvA</name>
    <name type="ordered locus">BARBAKC583_0150</name>
</gene>
<protein>
    <recommendedName>
        <fullName evidence="1">Holliday junction branch migration complex subunit RuvA</fullName>
    </recommendedName>
</protein>
<organism>
    <name type="scientific">Bartonella bacilliformis (strain ATCC 35685 / KC583 / Herrer 020/F12,63)</name>
    <dbReference type="NCBI Taxonomy" id="360095"/>
    <lineage>
        <taxon>Bacteria</taxon>
        <taxon>Pseudomonadati</taxon>
        <taxon>Pseudomonadota</taxon>
        <taxon>Alphaproteobacteria</taxon>
        <taxon>Hyphomicrobiales</taxon>
        <taxon>Bartonellaceae</taxon>
        <taxon>Bartonella</taxon>
    </lineage>
</organism>
<keyword id="KW-0963">Cytoplasm</keyword>
<keyword id="KW-0227">DNA damage</keyword>
<keyword id="KW-0233">DNA recombination</keyword>
<keyword id="KW-0234">DNA repair</keyword>
<keyword id="KW-0238">DNA-binding</keyword>
<sequence length="217" mass="23659">MIGKLTGILDSVFEDHIILDVQGVGYVVFLSNRLLSSLPERGQAVSLFIETHVREDAIRLFGFETKVEQDWFCLLQNVRGVGAKVALAILSTLPPPQLAQAITLSDIAMISRSPGVGKMVSERIINELKNKALPSNAPHQSMPHFVSYSSETSSQAGTQHTGHQHSMDALAALTKLGFERDQATHALQEAIKAFEGETPSSALLIRHSLKLLSSHLK</sequence>
<accession>A1UR85</accession>
<reference key="1">
    <citation type="submission" date="2006-12" db="EMBL/GenBank/DDBJ databases">
        <authorList>
            <person name="Hendrix L."/>
            <person name="Mohamoud Y."/>
            <person name="Radune D."/>
            <person name="Shvartsbeyn A."/>
            <person name="Daugherty S."/>
            <person name="Dodson R."/>
            <person name="Durkin A.S."/>
            <person name="Harkins D."/>
            <person name="Huot H."/>
            <person name="Kothari S.P."/>
            <person name="Madupu R."/>
            <person name="Li J."/>
            <person name="Nelson W.C."/>
            <person name="Shrivastava S."/>
            <person name="Giglio M.G."/>
            <person name="Haft D."/>
            <person name="Selengut J."/>
            <person name="Fraser-Ligget C."/>
            <person name="Seshadri R."/>
        </authorList>
    </citation>
    <scope>NUCLEOTIDE SEQUENCE [LARGE SCALE GENOMIC DNA]</scope>
    <source>
        <strain>ATCC 35685 / KC583 / Herrer 020/F12,63</strain>
    </source>
</reference>
<dbReference type="EMBL" id="CP000524">
    <property type="protein sequence ID" value="ABM44723.1"/>
    <property type="molecule type" value="Genomic_DNA"/>
</dbReference>
<dbReference type="RefSeq" id="WP_005765936.1">
    <property type="nucleotide sequence ID" value="NC_008783.1"/>
</dbReference>
<dbReference type="SMR" id="A1UR85"/>
<dbReference type="STRING" id="360095.BARBAKC583_0150"/>
<dbReference type="GeneID" id="4683890"/>
<dbReference type="KEGG" id="bbk:BARBAKC583_0150"/>
<dbReference type="PATRIC" id="fig|360095.6.peg.150"/>
<dbReference type="eggNOG" id="COG0632">
    <property type="taxonomic scope" value="Bacteria"/>
</dbReference>
<dbReference type="HOGENOM" id="CLU_087936_3_0_5"/>
<dbReference type="OrthoDB" id="5293449at2"/>
<dbReference type="Proteomes" id="UP000000643">
    <property type="component" value="Chromosome"/>
</dbReference>
<dbReference type="GO" id="GO:0005737">
    <property type="term" value="C:cytoplasm"/>
    <property type="evidence" value="ECO:0007669"/>
    <property type="project" value="UniProtKB-SubCell"/>
</dbReference>
<dbReference type="GO" id="GO:0009379">
    <property type="term" value="C:Holliday junction helicase complex"/>
    <property type="evidence" value="ECO:0007669"/>
    <property type="project" value="InterPro"/>
</dbReference>
<dbReference type="GO" id="GO:0048476">
    <property type="term" value="C:Holliday junction resolvase complex"/>
    <property type="evidence" value="ECO:0007669"/>
    <property type="project" value="UniProtKB-UniRule"/>
</dbReference>
<dbReference type="GO" id="GO:0005524">
    <property type="term" value="F:ATP binding"/>
    <property type="evidence" value="ECO:0007669"/>
    <property type="project" value="InterPro"/>
</dbReference>
<dbReference type="GO" id="GO:0000400">
    <property type="term" value="F:four-way junction DNA binding"/>
    <property type="evidence" value="ECO:0007669"/>
    <property type="project" value="UniProtKB-UniRule"/>
</dbReference>
<dbReference type="GO" id="GO:0009378">
    <property type="term" value="F:four-way junction helicase activity"/>
    <property type="evidence" value="ECO:0007669"/>
    <property type="project" value="InterPro"/>
</dbReference>
<dbReference type="GO" id="GO:0006310">
    <property type="term" value="P:DNA recombination"/>
    <property type="evidence" value="ECO:0007669"/>
    <property type="project" value="UniProtKB-UniRule"/>
</dbReference>
<dbReference type="GO" id="GO:0006281">
    <property type="term" value="P:DNA repair"/>
    <property type="evidence" value="ECO:0007669"/>
    <property type="project" value="UniProtKB-UniRule"/>
</dbReference>
<dbReference type="CDD" id="cd14332">
    <property type="entry name" value="UBA_RuvA_C"/>
    <property type="match status" value="1"/>
</dbReference>
<dbReference type="Gene3D" id="1.10.150.20">
    <property type="entry name" value="5' to 3' exonuclease, C-terminal subdomain"/>
    <property type="match status" value="1"/>
</dbReference>
<dbReference type="Gene3D" id="1.10.8.10">
    <property type="entry name" value="DNA helicase RuvA subunit, C-terminal domain"/>
    <property type="match status" value="1"/>
</dbReference>
<dbReference type="Gene3D" id="2.40.50.140">
    <property type="entry name" value="Nucleic acid-binding proteins"/>
    <property type="match status" value="1"/>
</dbReference>
<dbReference type="HAMAP" id="MF_00031">
    <property type="entry name" value="DNA_HJ_migration_RuvA"/>
    <property type="match status" value="1"/>
</dbReference>
<dbReference type="InterPro" id="IPR013849">
    <property type="entry name" value="DNA_helicase_Holl-junc_RuvA_I"/>
</dbReference>
<dbReference type="InterPro" id="IPR012340">
    <property type="entry name" value="NA-bd_OB-fold"/>
</dbReference>
<dbReference type="InterPro" id="IPR000085">
    <property type="entry name" value="RuvA"/>
</dbReference>
<dbReference type="InterPro" id="IPR010994">
    <property type="entry name" value="RuvA_2-like"/>
</dbReference>
<dbReference type="InterPro" id="IPR011114">
    <property type="entry name" value="RuvA_C"/>
</dbReference>
<dbReference type="InterPro" id="IPR036267">
    <property type="entry name" value="RuvA_C_sf"/>
</dbReference>
<dbReference type="NCBIfam" id="TIGR00084">
    <property type="entry name" value="ruvA"/>
    <property type="match status" value="1"/>
</dbReference>
<dbReference type="Pfam" id="PF14520">
    <property type="entry name" value="HHH_5"/>
    <property type="match status" value="1"/>
</dbReference>
<dbReference type="Pfam" id="PF07499">
    <property type="entry name" value="RuvA_C"/>
    <property type="match status" value="1"/>
</dbReference>
<dbReference type="Pfam" id="PF01330">
    <property type="entry name" value="RuvA_N"/>
    <property type="match status" value="1"/>
</dbReference>
<dbReference type="SUPFAM" id="SSF46929">
    <property type="entry name" value="DNA helicase RuvA subunit, C-terminal domain"/>
    <property type="match status" value="1"/>
</dbReference>
<dbReference type="SUPFAM" id="SSF50249">
    <property type="entry name" value="Nucleic acid-binding proteins"/>
    <property type="match status" value="1"/>
</dbReference>
<dbReference type="SUPFAM" id="SSF47781">
    <property type="entry name" value="RuvA domain 2-like"/>
    <property type="match status" value="1"/>
</dbReference>
<comment type="function">
    <text evidence="1">The RuvA-RuvB-RuvC complex processes Holliday junction (HJ) DNA during genetic recombination and DNA repair, while the RuvA-RuvB complex plays an important role in the rescue of blocked DNA replication forks via replication fork reversal (RFR). RuvA specifically binds to HJ cruciform DNA, conferring on it an open structure. The RuvB hexamer acts as an ATP-dependent pump, pulling dsDNA into and through the RuvAB complex. HJ branch migration allows RuvC to scan DNA until it finds its consensus sequence, where it cleaves and resolves the cruciform DNA.</text>
</comment>
<comment type="subunit">
    <text evidence="1">Homotetramer. Forms an RuvA(8)-RuvB(12)-Holliday junction (HJ) complex. HJ DNA is sandwiched between 2 RuvA tetramers; dsDNA enters through RuvA and exits via RuvB. An RuvB hexamer assembles on each DNA strand where it exits the tetramer. Each RuvB hexamer is contacted by two RuvA subunits (via domain III) on 2 adjacent RuvB subunits; this complex drives branch migration. In the full resolvosome a probable DNA-RuvA(4)-RuvB(12)-RuvC(2) complex forms which resolves the HJ.</text>
</comment>
<comment type="subcellular location">
    <subcellularLocation>
        <location evidence="1">Cytoplasm</location>
    </subcellularLocation>
</comment>
<comment type="domain">
    <text evidence="1">Has three domains with a flexible linker between the domains II and III and assumes an 'L' shape. Domain III is highly mobile and contacts RuvB.</text>
</comment>
<comment type="similarity">
    <text evidence="1">Belongs to the RuvA family.</text>
</comment>
<proteinExistence type="inferred from homology"/>
<evidence type="ECO:0000255" key="1">
    <source>
        <dbReference type="HAMAP-Rule" id="MF_00031"/>
    </source>
</evidence>